<protein>
    <recommendedName>
        <fullName evidence="7">Ipecac alkaloid beta-glucosidase 3</fullName>
        <shortName evidence="7">IpeGLU3</shortName>
        <ecNumber evidence="6">3.2.1.-</ecNumber>
    </recommendedName>
</protein>
<feature type="chain" id="PRO_0000462224" description="Ipecac alkaloid beta-glucosidase 3">
    <location>
        <begin position="1"/>
        <end position="543"/>
    </location>
</feature>
<feature type="active site" description="Proton donor" evidence="3">
    <location>
        <position position="186"/>
    </location>
</feature>
<feature type="active site" description="Nucleophile" evidence="3">
    <location>
        <position position="422"/>
    </location>
</feature>
<feature type="binding site" evidence="5">
    <location>
        <position position="36"/>
    </location>
    <ligand>
        <name>a beta-D-glucoside</name>
        <dbReference type="ChEBI" id="CHEBI:22798"/>
    </ligand>
</feature>
<feature type="binding site" evidence="5">
    <location>
        <position position="140"/>
    </location>
    <ligand>
        <name>a beta-D-glucoside</name>
        <dbReference type="ChEBI" id="CHEBI:22798"/>
    </ligand>
</feature>
<feature type="binding site" evidence="5">
    <location>
        <begin position="185"/>
        <end position="186"/>
    </location>
    <ligand>
        <name>a beta-D-glucoside</name>
        <dbReference type="ChEBI" id="CHEBI:22798"/>
    </ligand>
</feature>
<feature type="binding site" evidence="4">
    <location>
        <position position="350"/>
    </location>
    <ligand>
        <name>a beta-D-glucoside</name>
        <dbReference type="ChEBI" id="CHEBI:22798"/>
    </ligand>
</feature>
<feature type="binding site" evidence="5">
    <location>
        <position position="422"/>
    </location>
    <ligand>
        <name>a beta-D-glucoside</name>
        <dbReference type="ChEBI" id="CHEBI:22798"/>
    </ligand>
</feature>
<feature type="binding site" evidence="5">
    <location>
        <position position="471"/>
    </location>
    <ligand>
        <name>a beta-D-glucoside</name>
        <dbReference type="ChEBI" id="CHEBI:22798"/>
    </ligand>
</feature>
<feature type="binding site" evidence="2">
    <location>
        <position position="487"/>
    </location>
    <ligand>
        <name>a beta-D-glucoside</name>
        <dbReference type="ChEBI" id="CHEBI:22798"/>
    </ligand>
</feature>
<feature type="site" description="Controls the gate shape and acceptance of substrates" evidence="5">
    <location>
        <position position="394"/>
    </location>
</feature>
<dbReference type="EC" id="3.2.1.-" evidence="6"/>
<dbReference type="EMBL" id="AB455578">
    <property type="protein sequence ID" value="BAH02546.1"/>
    <property type="molecule type" value="mRNA"/>
</dbReference>
<dbReference type="EMBL" id="AB455585">
    <property type="protein sequence ID" value="BAH02553.1"/>
    <property type="molecule type" value="Genomic_DNA"/>
</dbReference>
<dbReference type="CAZy" id="GH1">
    <property type="family name" value="Glycoside Hydrolase Family 1"/>
</dbReference>
<dbReference type="GO" id="GO:0005829">
    <property type="term" value="C:cytosol"/>
    <property type="evidence" value="ECO:0000250"/>
    <property type="project" value="UniProtKB"/>
</dbReference>
<dbReference type="GO" id="GO:0008422">
    <property type="term" value="F:beta-glucosidase activity"/>
    <property type="evidence" value="ECO:0000314"/>
    <property type="project" value="UniProtKB"/>
</dbReference>
<dbReference type="GO" id="GO:0009251">
    <property type="term" value="P:glucan catabolic process"/>
    <property type="evidence" value="ECO:0000314"/>
    <property type="project" value="UniProtKB"/>
</dbReference>
<dbReference type="GO" id="GO:0033075">
    <property type="term" value="P:isoquinoline alkaloid biosynthetic process"/>
    <property type="evidence" value="ECO:0000314"/>
    <property type="project" value="UniProtKB"/>
</dbReference>
<dbReference type="FunFam" id="3.20.20.80:FF:000022">
    <property type="entry name" value="Beta-glucosidase 11"/>
    <property type="match status" value="1"/>
</dbReference>
<dbReference type="Gene3D" id="3.20.20.80">
    <property type="entry name" value="Glycosidases"/>
    <property type="match status" value="1"/>
</dbReference>
<dbReference type="InterPro" id="IPR001360">
    <property type="entry name" value="Glyco_hydro_1"/>
</dbReference>
<dbReference type="InterPro" id="IPR033132">
    <property type="entry name" value="Glyco_hydro_1_N_CS"/>
</dbReference>
<dbReference type="InterPro" id="IPR017853">
    <property type="entry name" value="Glycoside_hydrolase_SF"/>
</dbReference>
<dbReference type="PANTHER" id="PTHR10353">
    <property type="entry name" value="GLYCOSYL HYDROLASE"/>
    <property type="match status" value="1"/>
</dbReference>
<dbReference type="PANTHER" id="PTHR10353:SF137">
    <property type="entry name" value="MYROSINASE 3-RELATED"/>
    <property type="match status" value="1"/>
</dbReference>
<dbReference type="Pfam" id="PF00232">
    <property type="entry name" value="Glyco_hydro_1"/>
    <property type="match status" value="2"/>
</dbReference>
<dbReference type="PRINTS" id="PR00131">
    <property type="entry name" value="GLHYDRLASE1"/>
</dbReference>
<dbReference type="SUPFAM" id="SSF51445">
    <property type="entry name" value="(Trans)glycosidases"/>
    <property type="match status" value="1"/>
</dbReference>
<dbReference type="PROSITE" id="PS00653">
    <property type="entry name" value="GLYCOSYL_HYDROL_F1_2"/>
    <property type="match status" value="1"/>
</dbReference>
<comment type="function">
    <text evidence="6">Beta-glucosidase catalyzing deglucosylation on N-deacetylisoipecoside and N-deacetylipecoside.</text>
</comment>
<comment type="catalytic activity">
    <reaction evidence="6">
        <text>deacetylipecoside + H2O = deacetylipecoside aglycone + D-glucose</text>
        <dbReference type="Rhea" id="RHEA:78763"/>
        <dbReference type="ChEBI" id="CHEBI:4167"/>
        <dbReference type="ChEBI" id="CHEBI:15377"/>
        <dbReference type="ChEBI" id="CHEBI:58379"/>
        <dbReference type="ChEBI" id="CHEBI:229554"/>
    </reaction>
    <physiologicalReaction direction="left-to-right" evidence="6">
        <dbReference type="Rhea" id="RHEA:78764"/>
    </physiologicalReaction>
</comment>
<comment type="catalytic activity">
    <reaction evidence="6">
        <text>deacetylisoipecoside + H2O = deacetylisoipecoside aglycone + D-glucose</text>
        <dbReference type="Rhea" id="RHEA:78887"/>
        <dbReference type="ChEBI" id="CHEBI:4167"/>
        <dbReference type="ChEBI" id="CHEBI:15377"/>
        <dbReference type="ChEBI" id="CHEBI:58091"/>
        <dbReference type="ChEBI" id="CHEBI:229557"/>
    </reaction>
    <physiologicalReaction direction="left-to-right" evidence="6">
        <dbReference type="Rhea" id="RHEA:78888"/>
    </physiologicalReaction>
</comment>
<comment type="pathway">
    <text evidence="6">Alkaloid biosynthesis.</text>
</comment>
<comment type="subcellular location">
    <subcellularLocation>
        <location evidence="1">Cytoplasm</location>
        <location evidence="1">Cytosol</location>
    </subcellularLocation>
</comment>
<comment type="similarity">
    <text evidence="8">Belongs to the glycosyl hydrolase 1 family.</text>
</comment>
<gene>
    <name evidence="7" type="primary">GLU3</name>
</gene>
<reference evidence="9 10" key="1">
    <citation type="journal article" date="2008" name="J. Biol. Chem.">
        <title>The new beta-D-glucosidase in terpenoid-isoquinoline alkaloid biosynthesis in Psychotria ipecacuanha.</title>
        <authorList>
            <person name="Nomura T."/>
            <person name="Quesada A.L."/>
            <person name="Kutchan T.M."/>
        </authorList>
    </citation>
    <scope>NUCLEOTIDE SEQUENCE [MRNA]</scope>
    <scope>FUNCTION</scope>
    <scope>CATALYTIC ACTIVITY</scope>
    <scope>PATHWAY</scope>
    <source>
        <tissue>Root</tissue>
        <tissue>Shoot</tissue>
    </source>
</reference>
<name>GLU3_CARIP</name>
<evidence type="ECO:0000250" key="1">
    <source>
        <dbReference type="UniProtKB" id="B6ZKM3"/>
    </source>
</evidence>
<evidence type="ECO:0000250" key="2">
    <source>
        <dbReference type="UniProtKB" id="Q1XH05"/>
    </source>
</evidence>
<evidence type="ECO:0000250" key="3">
    <source>
        <dbReference type="UniProtKB" id="Q7XSK0"/>
    </source>
</evidence>
<evidence type="ECO:0000250" key="4">
    <source>
        <dbReference type="UniProtKB" id="Q8L7J2"/>
    </source>
</evidence>
<evidence type="ECO:0000250" key="5">
    <source>
        <dbReference type="UniProtKB" id="Q9SPP9"/>
    </source>
</evidence>
<evidence type="ECO:0000269" key="6">
    <source>
    </source>
</evidence>
<evidence type="ECO:0000303" key="7">
    <source>
    </source>
</evidence>
<evidence type="ECO:0000305" key="8"/>
<evidence type="ECO:0000312" key="9">
    <source>
        <dbReference type="EMBL" id="BAH02546.1"/>
    </source>
</evidence>
<evidence type="ECO:0000312" key="10">
    <source>
        <dbReference type="EMBL" id="BAH02553.1"/>
    </source>
</evidence>
<keyword id="KW-0017">Alkaloid metabolism</keyword>
<keyword id="KW-0963">Cytoplasm</keyword>
<keyword id="KW-0326">Glycosidase</keyword>
<keyword id="KW-0378">Hydrolase</keyword>
<sequence length="543" mass="61790">MSSVLPTPVLPTPGRNINRGHFPDDFIFGAGTSSYQIEGAAREGGRGPSIWDTFTHTHPELIQDGSNGDTAINSYNLYKEDIKIVKLMGLDAYRFSISWPRILPGGSINAGINQEGIKYYNNLIDELLANDIVPYVTLFHWDVPQALQDQYDGFLSDKIVDDFRDFAELCFWEFGDRVKNWITINEPQSYSDFFGVAYDTPPKAHALKASRLLVPTTVARPSKPVRVFASTADPGTTTADQVYKVGHNLLLAHAAAIQVYRDKFQNTQEGTFGMALVTQWMKPLNENNPADVEAASRAFDFKFGWFMQPLITGEYPKSMRQLLGPRLREFTPDQKKLLIGSYDYVGVNYYTATYVSSAQPPHDKKKAVFHTDGNFYTTDSKDGVLIGPLAGPAWLNIVPEGIYHVLHDIKENYEDPVIYITENGVYEVNDTAKTLSEARVDTTRLHYLQDHLSKVLEARHQGVRVQGYLVWSLMDNWELRAGYTSRFGLIHVDYYNNFARYPKDSAIWFRNAFHKRLRIHVNKARPQEDDGAFDTPRKRLRKY</sequence>
<accession>B6ZKM5</accession>
<proteinExistence type="evidence at protein level"/>
<organism>
    <name type="scientific">Carapichea ipecacuanha</name>
    <name type="common">Ipecac</name>
    <name type="synonym">Callicocca ipecacuanha</name>
    <dbReference type="NCBI Taxonomy" id="77880"/>
    <lineage>
        <taxon>Eukaryota</taxon>
        <taxon>Viridiplantae</taxon>
        <taxon>Streptophyta</taxon>
        <taxon>Embryophyta</taxon>
        <taxon>Tracheophyta</taxon>
        <taxon>Spermatophyta</taxon>
        <taxon>Magnoliopsida</taxon>
        <taxon>eudicotyledons</taxon>
        <taxon>Gunneridae</taxon>
        <taxon>Pentapetalae</taxon>
        <taxon>asterids</taxon>
        <taxon>lamiids</taxon>
        <taxon>Gentianales</taxon>
        <taxon>Rubiaceae</taxon>
        <taxon>Rubioideae</taxon>
        <taxon>Palicoureeae</taxon>
        <taxon>Carapichea</taxon>
    </lineage>
</organism>